<name>ASZ1_EULMM</name>
<reference key="1">
    <citation type="submission" date="2005-11" db="EMBL/GenBank/DDBJ databases">
        <title>NISC comparative sequencing initiative.</title>
        <authorList>
            <person name="Antonellis A."/>
            <person name="Ayele K."/>
            <person name="Benjamin B."/>
            <person name="Blakesley R.W."/>
            <person name="Boakye A."/>
            <person name="Bouffard G.G."/>
            <person name="Brinkley C."/>
            <person name="Brooks S."/>
            <person name="Chu G."/>
            <person name="Coleman H."/>
            <person name="Engle J."/>
            <person name="Gestole M."/>
            <person name="Greene A."/>
            <person name="Guan X."/>
            <person name="Gupta J."/>
            <person name="Haghighi P."/>
            <person name="Han J."/>
            <person name="Hansen N."/>
            <person name="Ho S.-L."/>
            <person name="Hu P."/>
            <person name="Hunter G."/>
            <person name="Hurle B."/>
            <person name="Idol J.R."/>
            <person name="Kwong P."/>
            <person name="Laric P."/>
            <person name="Larson S."/>
            <person name="Lee-Lin S.-Q."/>
            <person name="Legaspi R."/>
            <person name="Madden M."/>
            <person name="Maduro Q.L."/>
            <person name="Maduro V.B."/>
            <person name="Margulies E.H."/>
            <person name="Masiello C."/>
            <person name="Maskeri B."/>
            <person name="McDowell J."/>
            <person name="Mojidi H.A."/>
            <person name="Mullikin J.C."/>
            <person name="Oestreicher J.S."/>
            <person name="Park M."/>
            <person name="Portnoy M.E."/>
            <person name="Prasad A."/>
            <person name="Puri O."/>
            <person name="Reddix-Dugue N."/>
            <person name="Schandler K."/>
            <person name="Schueler M.G."/>
            <person name="Sison C."/>
            <person name="Stantripop S."/>
            <person name="Stephen E."/>
            <person name="Taye A."/>
            <person name="Thomas J.W."/>
            <person name="Thomas P.J."/>
            <person name="Tsipouri V."/>
            <person name="Ung L."/>
            <person name="Vogt J.L."/>
            <person name="Wetherby K.D."/>
            <person name="Young A."/>
            <person name="Green E.D."/>
        </authorList>
    </citation>
    <scope>NUCLEOTIDE SEQUENCE [LARGE SCALE GENOMIC DNA]</scope>
</reference>
<proteinExistence type="inferred from homology"/>
<evidence type="ECO:0000250" key="1"/>
<evidence type="ECO:0000250" key="2">
    <source>
        <dbReference type="UniProtKB" id="Q8VD46"/>
    </source>
</evidence>
<evidence type="ECO:0000256" key="3">
    <source>
        <dbReference type="SAM" id="MobiDB-lite"/>
    </source>
</evidence>
<feature type="chain" id="PRO_0000260390" description="Ankyrin repeat, SAM and basic leucine zipper domain-containing protein 1">
    <location>
        <begin position="1"/>
        <end position="481"/>
    </location>
</feature>
<feature type="repeat" description="ANK 1">
    <location>
        <begin position="45"/>
        <end position="74"/>
    </location>
</feature>
<feature type="repeat" description="ANK 2">
    <location>
        <begin position="78"/>
        <end position="107"/>
    </location>
</feature>
<feature type="repeat" description="ANK 3">
    <location>
        <begin position="110"/>
        <end position="144"/>
    </location>
</feature>
<feature type="repeat" description="ANK 4">
    <location>
        <begin position="148"/>
        <end position="177"/>
    </location>
</feature>
<feature type="repeat" description="ANK 5">
    <location>
        <begin position="181"/>
        <end position="210"/>
    </location>
</feature>
<feature type="repeat" description="ANK 6">
    <location>
        <begin position="214"/>
        <end position="243"/>
    </location>
</feature>
<feature type="domain" description="SAM">
    <location>
        <begin position="272"/>
        <end position="334"/>
    </location>
</feature>
<feature type="region of interest" description="Disordered" evidence="3">
    <location>
        <begin position="1"/>
        <end position="23"/>
    </location>
</feature>
<feature type="compositionally biased region" description="Low complexity" evidence="3">
    <location>
        <begin position="1"/>
        <end position="10"/>
    </location>
</feature>
<feature type="modified residue" description="Phosphoserine" evidence="2">
    <location>
        <position position="17"/>
    </location>
</feature>
<feature type="modified residue" description="Phosphoserine" evidence="2">
    <location>
        <position position="18"/>
    </location>
</feature>
<feature type="modified residue" description="Phosphoserine" evidence="2">
    <location>
        <position position="20"/>
    </location>
</feature>
<keyword id="KW-0040">ANK repeat</keyword>
<keyword id="KW-0963">Cytoplasm</keyword>
<keyword id="KW-0217">Developmental protein</keyword>
<keyword id="KW-0221">Differentiation</keyword>
<keyword id="KW-0469">Meiosis</keyword>
<keyword id="KW-0597">Phosphoprotein</keyword>
<keyword id="KW-0677">Repeat</keyword>
<keyword id="KW-0943">RNA-mediated gene silencing</keyword>
<keyword id="KW-0744">Spermatogenesis</keyword>
<comment type="function">
    <text evidence="1">Plays a central role during spermatogenesis by repressing transposable elements and preventing their mobilization, which is essential for the germline integrity. Acts via the piRNA metabolic process, which mediates the repression of transposable elements during meiosis by forming complexes composed of piRNAs and Piwi proteins and governs the methylation and subsequent repression of transposons. Its association with pi-bodies suggests a participation in the primary piRNAs metabolic process. Required prior to the pachytene stage to facilitate the production of multiple types of piRNAs, including those associated with repeats involved in the regulation of retrotransposons. May act by mediating protein-protein interactions during germ cell maturation (By similarity).</text>
</comment>
<comment type="subunit">
    <text evidence="1">Interacts with DDX4, PIWIL1, RANBP9 and TDRD1.</text>
</comment>
<comment type="subcellular location">
    <subcellularLocation>
        <location evidence="1">Cytoplasm</location>
    </subcellularLocation>
    <text evidence="1">Component of the meiotic nuage, also named P granule, a germ-cell-specific organelle required to repress transposon activity during meiosis. Specifically localizes to pi-bodies, a subset of the nuage which contains primary piRNAs (By similarity).</text>
</comment>
<gene>
    <name type="primary">ASZ1</name>
    <name type="synonym">GASZ</name>
</gene>
<protein>
    <recommendedName>
        <fullName>Ankyrin repeat, SAM and basic leucine zipper domain-containing protein 1</fullName>
    </recommendedName>
    <alternativeName>
        <fullName>Germ cell-specific ankyrin, SAM and basic leucine zipper domain-containing protein</fullName>
    </alternativeName>
</protein>
<dbReference type="EMBL" id="DP000024">
    <property type="protein sequence ID" value="ABC87443.1"/>
    <property type="molecule type" value="Genomic_DNA"/>
</dbReference>
<dbReference type="SMR" id="Q2IBG0"/>
<dbReference type="GO" id="GO:0071546">
    <property type="term" value="C:pi-body"/>
    <property type="evidence" value="ECO:0000250"/>
    <property type="project" value="UniProtKB"/>
</dbReference>
<dbReference type="GO" id="GO:0030154">
    <property type="term" value="P:cell differentiation"/>
    <property type="evidence" value="ECO:0007669"/>
    <property type="project" value="UniProtKB-KW"/>
</dbReference>
<dbReference type="GO" id="GO:0007140">
    <property type="term" value="P:male meiotic nuclear division"/>
    <property type="evidence" value="ECO:0000250"/>
    <property type="project" value="UniProtKB"/>
</dbReference>
<dbReference type="GO" id="GO:0031047">
    <property type="term" value="P:regulatory ncRNA-mediated gene silencing"/>
    <property type="evidence" value="ECO:0007669"/>
    <property type="project" value="UniProtKB-KW"/>
</dbReference>
<dbReference type="GO" id="GO:0007283">
    <property type="term" value="P:spermatogenesis"/>
    <property type="evidence" value="ECO:0000250"/>
    <property type="project" value="UniProtKB"/>
</dbReference>
<dbReference type="GO" id="GO:0010526">
    <property type="term" value="P:transposable element silencing"/>
    <property type="evidence" value="ECO:0000250"/>
    <property type="project" value="UniProtKB"/>
</dbReference>
<dbReference type="CDD" id="cd09521">
    <property type="entry name" value="SAM_ASZ1"/>
    <property type="match status" value="1"/>
</dbReference>
<dbReference type="FunFam" id="1.25.40.20:FF:000192">
    <property type="entry name" value="Ankyrin repeat, SAM and basic leucine zipper domain-containing 1"/>
    <property type="match status" value="1"/>
</dbReference>
<dbReference type="FunFam" id="1.10.150.50:FF:000060">
    <property type="entry name" value="Ankyrin repeat, SAM and basic leucine zipper domain-containing protein 1"/>
    <property type="match status" value="1"/>
</dbReference>
<dbReference type="Gene3D" id="1.25.40.20">
    <property type="entry name" value="Ankyrin repeat-containing domain"/>
    <property type="match status" value="2"/>
</dbReference>
<dbReference type="Gene3D" id="1.10.150.50">
    <property type="entry name" value="Transcription Factor, Ets-1"/>
    <property type="match status" value="1"/>
</dbReference>
<dbReference type="InterPro" id="IPR002110">
    <property type="entry name" value="Ankyrin_rpt"/>
</dbReference>
<dbReference type="InterPro" id="IPR036770">
    <property type="entry name" value="Ankyrin_rpt-contain_sf"/>
</dbReference>
<dbReference type="InterPro" id="IPR042650">
    <property type="entry name" value="Asz1_SAM"/>
</dbReference>
<dbReference type="InterPro" id="IPR001660">
    <property type="entry name" value="SAM"/>
</dbReference>
<dbReference type="InterPro" id="IPR013761">
    <property type="entry name" value="SAM/pointed_sf"/>
</dbReference>
<dbReference type="PANTHER" id="PTHR24157">
    <property type="entry name" value="ANKYRIN REPEAT, SAM AND BASIC LEUCINE ZIPPER DOMAIN-CONTAINING PROTEIN 1"/>
    <property type="match status" value="1"/>
</dbReference>
<dbReference type="PANTHER" id="PTHR24157:SF3">
    <property type="entry name" value="ANKYRIN REPEAT, SAM AND BASIC LEUCINE ZIPPER DOMAIN-CONTAINING PROTEIN 1"/>
    <property type="match status" value="1"/>
</dbReference>
<dbReference type="Pfam" id="PF12796">
    <property type="entry name" value="Ank_2"/>
    <property type="match status" value="1"/>
</dbReference>
<dbReference type="Pfam" id="PF13637">
    <property type="entry name" value="Ank_4"/>
    <property type="match status" value="1"/>
</dbReference>
<dbReference type="Pfam" id="PF07647">
    <property type="entry name" value="SAM_2"/>
    <property type="match status" value="1"/>
</dbReference>
<dbReference type="PRINTS" id="PR01415">
    <property type="entry name" value="ANKYRIN"/>
</dbReference>
<dbReference type="SMART" id="SM00248">
    <property type="entry name" value="ANK"/>
    <property type="match status" value="5"/>
</dbReference>
<dbReference type="SUPFAM" id="SSF48403">
    <property type="entry name" value="Ankyrin repeat"/>
    <property type="match status" value="1"/>
</dbReference>
<dbReference type="SUPFAM" id="SSF140860">
    <property type="entry name" value="Pseudo ankyrin repeat-like"/>
    <property type="match status" value="1"/>
</dbReference>
<dbReference type="SUPFAM" id="SSF47769">
    <property type="entry name" value="SAM/Pointed domain"/>
    <property type="match status" value="1"/>
</dbReference>
<dbReference type="PROSITE" id="PS50297">
    <property type="entry name" value="ANK_REP_REGION"/>
    <property type="match status" value="1"/>
</dbReference>
<dbReference type="PROSITE" id="PS50088">
    <property type="entry name" value="ANK_REPEAT"/>
    <property type="match status" value="3"/>
</dbReference>
<sequence length="481" mass="53732">MASGALRGLAVAGGGESSDSEDDGWEIGYLDRVSQKLKGPLPGEEKSETFKKALTTGDISLVQELLDSGISVDSSFRYGWTPLMYAASIANVELVRVLLNRGANASFDKDKQTILITACSARGSEEQILKCVELLLSRNADPNIACRRLMTPIMYAARDGHPQVVALLVAHGAEVNAQDENGYTALTWAARQGHKNVVLKLLELGANKMLQTKDGKIPSEIAKRNKHLEIFNFLSLTLNPLEGNLKQLTKEETICKLLTTDSDKEKDHIFSSYTAFGDLEIFLHGLGLEHMTDLLKEKDITLRHLLTMRKDEFTKNGITSKDQEKILSALKELEVEEIKFGELPEVAKLEISGDEFLNFLLKLNKQCGHLITAVQNIITELPVNSHKIVLEWASPRNFTSVCEELVSNVEDLSEEVHKLKDLIQKLQNERENDPTHIPLMEEVSTWNSRILKRTAIAVCGFGFLLFICKLTVQRRYPNICF</sequence>
<organism>
    <name type="scientific">Eulemur macaco macaco</name>
    <name type="common">Black lemur</name>
    <dbReference type="NCBI Taxonomy" id="30603"/>
    <lineage>
        <taxon>Eukaryota</taxon>
        <taxon>Metazoa</taxon>
        <taxon>Chordata</taxon>
        <taxon>Craniata</taxon>
        <taxon>Vertebrata</taxon>
        <taxon>Euteleostomi</taxon>
        <taxon>Mammalia</taxon>
        <taxon>Eutheria</taxon>
        <taxon>Euarchontoglires</taxon>
        <taxon>Primates</taxon>
        <taxon>Strepsirrhini</taxon>
        <taxon>Lemuriformes</taxon>
        <taxon>Lemuridae</taxon>
        <taxon>Eulemur</taxon>
    </lineage>
</organism>
<accession>Q2IBG0</accession>